<gene>
    <name evidence="1" type="primary">rplW</name>
    <name type="ordered locus">HEAR3164</name>
</gene>
<protein>
    <recommendedName>
        <fullName evidence="1">Large ribosomal subunit protein uL23</fullName>
    </recommendedName>
    <alternativeName>
        <fullName evidence="2">50S ribosomal protein L23</fullName>
    </alternativeName>
</protein>
<organism>
    <name type="scientific">Herminiimonas arsenicoxydans</name>
    <dbReference type="NCBI Taxonomy" id="204773"/>
    <lineage>
        <taxon>Bacteria</taxon>
        <taxon>Pseudomonadati</taxon>
        <taxon>Pseudomonadota</taxon>
        <taxon>Betaproteobacteria</taxon>
        <taxon>Burkholderiales</taxon>
        <taxon>Oxalobacteraceae</taxon>
        <taxon>Herminiimonas</taxon>
    </lineage>
</organism>
<keyword id="KW-1185">Reference proteome</keyword>
<keyword id="KW-0687">Ribonucleoprotein</keyword>
<keyword id="KW-0689">Ribosomal protein</keyword>
<keyword id="KW-0694">RNA-binding</keyword>
<keyword id="KW-0699">rRNA-binding</keyword>
<sequence>MSAVIKHSEERLMKVLLAPVISEKATFVAEKNEQVVFLVMPDATKLEIKAAVELLFKVQVESVQVANRQGKQKRSGRFNGRRNHTRRAFVCLKPGQEINFTEEAK</sequence>
<evidence type="ECO:0000255" key="1">
    <source>
        <dbReference type="HAMAP-Rule" id="MF_01369"/>
    </source>
</evidence>
<evidence type="ECO:0000305" key="2"/>
<proteinExistence type="inferred from homology"/>
<dbReference type="EMBL" id="CU207211">
    <property type="protein sequence ID" value="CAL63273.1"/>
    <property type="molecule type" value="Genomic_DNA"/>
</dbReference>
<dbReference type="SMR" id="A4G9T6"/>
<dbReference type="STRING" id="204773.HEAR3164"/>
<dbReference type="KEGG" id="har:HEAR3164"/>
<dbReference type="eggNOG" id="COG0089">
    <property type="taxonomic scope" value="Bacteria"/>
</dbReference>
<dbReference type="HOGENOM" id="CLU_037562_3_1_4"/>
<dbReference type="OrthoDB" id="9793353at2"/>
<dbReference type="Proteomes" id="UP000006697">
    <property type="component" value="Chromosome"/>
</dbReference>
<dbReference type="GO" id="GO:1990904">
    <property type="term" value="C:ribonucleoprotein complex"/>
    <property type="evidence" value="ECO:0007669"/>
    <property type="project" value="UniProtKB-KW"/>
</dbReference>
<dbReference type="GO" id="GO:0005840">
    <property type="term" value="C:ribosome"/>
    <property type="evidence" value="ECO:0007669"/>
    <property type="project" value="UniProtKB-KW"/>
</dbReference>
<dbReference type="GO" id="GO:0019843">
    <property type="term" value="F:rRNA binding"/>
    <property type="evidence" value="ECO:0007669"/>
    <property type="project" value="UniProtKB-UniRule"/>
</dbReference>
<dbReference type="GO" id="GO:0003735">
    <property type="term" value="F:structural constituent of ribosome"/>
    <property type="evidence" value="ECO:0007669"/>
    <property type="project" value="InterPro"/>
</dbReference>
<dbReference type="GO" id="GO:0006412">
    <property type="term" value="P:translation"/>
    <property type="evidence" value="ECO:0007669"/>
    <property type="project" value="UniProtKB-UniRule"/>
</dbReference>
<dbReference type="FunFam" id="3.30.70.330:FF:000001">
    <property type="entry name" value="50S ribosomal protein L23"/>
    <property type="match status" value="1"/>
</dbReference>
<dbReference type="Gene3D" id="3.30.70.330">
    <property type="match status" value="1"/>
</dbReference>
<dbReference type="HAMAP" id="MF_01369_B">
    <property type="entry name" value="Ribosomal_uL23_B"/>
    <property type="match status" value="1"/>
</dbReference>
<dbReference type="InterPro" id="IPR012677">
    <property type="entry name" value="Nucleotide-bd_a/b_plait_sf"/>
</dbReference>
<dbReference type="InterPro" id="IPR013025">
    <property type="entry name" value="Ribosomal_uL23-like"/>
</dbReference>
<dbReference type="InterPro" id="IPR012678">
    <property type="entry name" value="Ribosomal_uL23/eL15/eS24_sf"/>
</dbReference>
<dbReference type="NCBIfam" id="NF004359">
    <property type="entry name" value="PRK05738.1-3"/>
    <property type="match status" value="1"/>
</dbReference>
<dbReference type="NCBIfam" id="NF004363">
    <property type="entry name" value="PRK05738.2-4"/>
    <property type="match status" value="1"/>
</dbReference>
<dbReference type="PANTHER" id="PTHR11620">
    <property type="entry name" value="60S RIBOSOMAL PROTEIN L23A"/>
    <property type="match status" value="1"/>
</dbReference>
<dbReference type="Pfam" id="PF00276">
    <property type="entry name" value="Ribosomal_L23"/>
    <property type="match status" value="1"/>
</dbReference>
<dbReference type="SUPFAM" id="SSF54189">
    <property type="entry name" value="Ribosomal proteins S24e, L23 and L15e"/>
    <property type="match status" value="1"/>
</dbReference>
<accession>A4G9T6</accession>
<reference key="1">
    <citation type="journal article" date="2007" name="PLoS Genet.">
        <title>A tale of two oxidation states: bacterial colonization of arsenic-rich environments.</title>
        <authorList>
            <person name="Muller D."/>
            <person name="Medigue C."/>
            <person name="Koechler S."/>
            <person name="Barbe V."/>
            <person name="Barakat M."/>
            <person name="Talla E."/>
            <person name="Bonnefoy V."/>
            <person name="Krin E."/>
            <person name="Arsene-Ploetze F."/>
            <person name="Carapito C."/>
            <person name="Chandler M."/>
            <person name="Cournoyer B."/>
            <person name="Cruveiller S."/>
            <person name="Dossat C."/>
            <person name="Duval S."/>
            <person name="Heymann M."/>
            <person name="Leize E."/>
            <person name="Lieutaud A."/>
            <person name="Lievremont D."/>
            <person name="Makita Y."/>
            <person name="Mangenot S."/>
            <person name="Nitschke W."/>
            <person name="Ortet P."/>
            <person name="Perdrial N."/>
            <person name="Schoepp B."/>
            <person name="Siguier P."/>
            <person name="Simeonova D.D."/>
            <person name="Rouy Z."/>
            <person name="Segurens B."/>
            <person name="Turlin E."/>
            <person name="Vallenet D."/>
            <person name="van Dorsselaer A."/>
            <person name="Weiss S."/>
            <person name="Weissenbach J."/>
            <person name="Lett M.-C."/>
            <person name="Danchin A."/>
            <person name="Bertin P.N."/>
        </authorList>
    </citation>
    <scope>NUCLEOTIDE SEQUENCE [LARGE SCALE GENOMIC DNA]</scope>
    <source>
        <strain>ULPAs1</strain>
    </source>
</reference>
<comment type="function">
    <text evidence="1">One of the early assembly proteins it binds 23S rRNA. One of the proteins that surrounds the polypeptide exit tunnel on the outside of the ribosome. Forms the main docking site for trigger factor binding to the ribosome.</text>
</comment>
<comment type="subunit">
    <text evidence="1">Part of the 50S ribosomal subunit. Contacts protein L29, and trigger factor when it is bound to the ribosome.</text>
</comment>
<comment type="similarity">
    <text evidence="1">Belongs to the universal ribosomal protein uL23 family.</text>
</comment>
<feature type="chain" id="PRO_1000087220" description="Large ribosomal subunit protein uL23">
    <location>
        <begin position="1"/>
        <end position="105"/>
    </location>
</feature>
<name>RL23_HERAR</name>